<keyword id="KW-0963">Cytoplasm</keyword>
<keyword id="KW-0378">Hydrolase</keyword>
<keyword id="KW-1185">Reference proteome</keyword>
<keyword id="KW-0694">RNA-binding</keyword>
<keyword id="KW-0820">tRNA-binding</keyword>
<sequence>MFYLLAGLGNPGKKYELSRHNAGFMIVDAIASEFYFPSFRERHNALISIGNIKSHRVILVKPWTFMNNSGAPIMSIASLYKIPLDNIIIFHDEVEINFCTIRVKKSGGNAGHNGLKSIDNLLGKDYWRVRFGIGRPINKTNLKIDLSYYVLSQFHNIKAVNNTILNIVEHITLLLEKKPSMFMEKVKNLIKYEDIPTE</sequence>
<evidence type="ECO:0000255" key="1">
    <source>
        <dbReference type="HAMAP-Rule" id="MF_00083"/>
    </source>
</evidence>
<protein>
    <recommendedName>
        <fullName evidence="1">Peptidyl-tRNA hydrolase</fullName>
        <shortName evidence="1">Pth</shortName>
        <ecNumber evidence="1">3.1.1.29</ecNumber>
    </recommendedName>
</protein>
<name>PTH_EHRCR</name>
<comment type="function">
    <text evidence="1">Hydrolyzes ribosome-free peptidyl-tRNAs (with 1 or more amino acids incorporated), which drop off the ribosome during protein synthesis, or as a result of ribosome stalling.</text>
</comment>
<comment type="function">
    <text evidence="1">Catalyzes the release of premature peptidyl moieties from peptidyl-tRNA molecules trapped in stalled 50S ribosomal subunits, and thus maintains levels of free tRNAs and 50S ribosomes.</text>
</comment>
<comment type="catalytic activity">
    <reaction evidence="1">
        <text>an N-acyl-L-alpha-aminoacyl-tRNA + H2O = an N-acyl-L-amino acid + a tRNA + H(+)</text>
        <dbReference type="Rhea" id="RHEA:54448"/>
        <dbReference type="Rhea" id="RHEA-COMP:10123"/>
        <dbReference type="Rhea" id="RHEA-COMP:13883"/>
        <dbReference type="ChEBI" id="CHEBI:15377"/>
        <dbReference type="ChEBI" id="CHEBI:15378"/>
        <dbReference type="ChEBI" id="CHEBI:59874"/>
        <dbReference type="ChEBI" id="CHEBI:78442"/>
        <dbReference type="ChEBI" id="CHEBI:138191"/>
        <dbReference type="EC" id="3.1.1.29"/>
    </reaction>
</comment>
<comment type="subunit">
    <text evidence="1">Monomer.</text>
</comment>
<comment type="subcellular location">
    <subcellularLocation>
        <location evidence="1">Cytoplasm</location>
    </subcellularLocation>
</comment>
<comment type="similarity">
    <text evidence="1">Belongs to the PTH family.</text>
</comment>
<dbReference type="EC" id="3.1.1.29" evidence="1"/>
<dbReference type="EMBL" id="CP000236">
    <property type="protein sequence ID" value="ABD45087.1"/>
    <property type="molecule type" value="Genomic_DNA"/>
</dbReference>
<dbReference type="RefSeq" id="WP_006010086.1">
    <property type="nucleotide sequence ID" value="NC_007799.1"/>
</dbReference>
<dbReference type="SMR" id="Q2GHW4"/>
<dbReference type="STRING" id="205920.ECH_0141"/>
<dbReference type="KEGG" id="ech:ECH_0141"/>
<dbReference type="eggNOG" id="COG0193">
    <property type="taxonomic scope" value="Bacteria"/>
</dbReference>
<dbReference type="HOGENOM" id="CLU_062456_4_1_5"/>
<dbReference type="OrthoDB" id="9800507at2"/>
<dbReference type="Proteomes" id="UP000008320">
    <property type="component" value="Chromosome"/>
</dbReference>
<dbReference type="GO" id="GO:0005737">
    <property type="term" value="C:cytoplasm"/>
    <property type="evidence" value="ECO:0007669"/>
    <property type="project" value="UniProtKB-SubCell"/>
</dbReference>
<dbReference type="GO" id="GO:0004045">
    <property type="term" value="F:peptidyl-tRNA hydrolase activity"/>
    <property type="evidence" value="ECO:0007669"/>
    <property type="project" value="UniProtKB-UniRule"/>
</dbReference>
<dbReference type="GO" id="GO:0000049">
    <property type="term" value="F:tRNA binding"/>
    <property type="evidence" value="ECO:0007669"/>
    <property type="project" value="UniProtKB-UniRule"/>
</dbReference>
<dbReference type="GO" id="GO:0006515">
    <property type="term" value="P:protein quality control for misfolded or incompletely synthesized proteins"/>
    <property type="evidence" value="ECO:0007669"/>
    <property type="project" value="UniProtKB-UniRule"/>
</dbReference>
<dbReference type="GO" id="GO:0072344">
    <property type="term" value="P:rescue of stalled ribosome"/>
    <property type="evidence" value="ECO:0007669"/>
    <property type="project" value="UniProtKB-UniRule"/>
</dbReference>
<dbReference type="CDD" id="cd00462">
    <property type="entry name" value="PTH"/>
    <property type="match status" value="1"/>
</dbReference>
<dbReference type="Gene3D" id="3.40.50.1470">
    <property type="entry name" value="Peptidyl-tRNA hydrolase"/>
    <property type="match status" value="1"/>
</dbReference>
<dbReference type="HAMAP" id="MF_00083">
    <property type="entry name" value="Pept_tRNA_hydro_bact"/>
    <property type="match status" value="1"/>
</dbReference>
<dbReference type="InterPro" id="IPR001328">
    <property type="entry name" value="Pept_tRNA_hydro"/>
</dbReference>
<dbReference type="InterPro" id="IPR018171">
    <property type="entry name" value="Pept_tRNA_hydro_CS"/>
</dbReference>
<dbReference type="InterPro" id="IPR036416">
    <property type="entry name" value="Pept_tRNA_hydro_sf"/>
</dbReference>
<dbReference type="NCBIfam" id="TIGR00447">
    <property type="entry name" value="pth"/>
    <property type="match status" value="1"/>
</dbReference>
<dbReference type="PANTHER" id="PTHR17224">
    <property type="entry name" value="PEPTIDYL-TRNA HYDROLASE"/>
    <property type="match status" value="1"/>
</dbReference>
<dbReference type="PANTHER" id="PTHR17224:SF1">
    <property type="entry name" value="PEPTIDYL-TRNA HYDROLASE"/>
    <property type="match status" value="1"/>
</dbReference>
<dbReference type="Pfam" id="PF01195">
    <property type="entry name" value="Pept_tRNA_hydro"/>
    <property type="match status" value="1"/>
</dbReference>
<dbReference type="SUPFAM" id="SSF53178">
    <property type="entry name" value="Peptidyl-tRNA hydrolase-like"/>
    <property type="match status" value="1"/>
</dbReference>
<dbReference type="PROSITE" id="PS01196">
    <property type="entry name" value="PEPT_TRNA_HYDROL_2"/>
    <property type="match status" value="1"/>
</dbReference>
<proteinExistence type="inferred from homology"/>
<organism>
    <name type="scientific">Ehrlichia chaffeensis (strain ATCC CRL-10679 / Arkansas)</name>
    <dbReference type="NCBI Taxonomy" id="205920"/>
    <lineage>
        <taxon>Bacteria</taxon>
        <taxon>Pseudomonadati</taxon>
        <taxon>Pseudomonadota</taxon>
        <taxon>Alphaproteobacteria</taxon>
        <taxon>Rickettsiales</taxon>
        <taxon>Anaplasmataceae</taxon>
        <taxon>Ehrlichia</taxon>
    </lineage>
</organism>
<gene>
    <name evidence="1" type="primary">pth</name>
    <name type="ordered locus">ECH_0141</name>
</gene>
<reference key="1">
    <citation type="journal article" date="2006" name="PLoS Genet.">
        <title>Comparative genomics of emerging human ehrlichiosis agents.</title>
        <authorList>
            <person name="Dunning Hotopp J.C."/>
            <person name="Lin M."/>
            <person name="Madupu R."/>
            <person name="Crabtree J."/>
            <person name="Angiuoli S.V."/>
            <person name="Eisen J.A."/>
            <person name="Seshadri R."/>
            <person name="Ren Q."/>
            <person name="Wu M."/>
            <person name="Utterback T.R."/>
            <person name="Smith S."/>
            <person name="Lewis M."/>
            <person name="Khouri H."/>
            <person name="Zhang C."/>
            <person name="Niu H."/>
            <person name="Lin Q."/>
            <person name="Ohashi N."/>
            <person name="Zhi N."/>
            <person name="Nelson W.C."/>
            <person name="Brinkac L.M."/>
            <person name="Dodson R.J."/>
            <person name="Rosovitz M.J."/>
            <person name="Sundaram J.P."/>
            <person name="Daugherty S.C."/>
            <person name="Davidsen T."/>
            <person name="Durkin A.S."/>
            <person name="Gwinn M.L."/>
            <person name="Haft D.H."/>
            <person name="Selengut J.D."/>
            <person name="Sullivan S.A."/>
            <person name="Zafar N."/>
            <person name="Zhou L."/>
            <person name="Benahmed F."/>
            <person name="Forberger H."/>
            <person name="Halpin R."/>
            <person name="Mulligan S."/>
            <person name="Robinson J."/>
            <person name="White O."/>
            <person name="Rikihisa Y."/>
            <person name="Tettelin H."/>
        </authorList>
    </citation>
    <scope>NUCLEOTIDE SEQUENCE [LARGE SCALE GENOMIC DNA]</scope>
    <source>
        <strain>ATCC CRL-10679 / Arkansas</strain>
    </source>
</reference>
<accession>Q2GHW4</accession>
<feature type="chain" id="PRO_0000264035" description="Peptidyl-tRNA hydrolase">
    <location>
        <begin position="1"/>
        <end position="198"/>
    </location>
</feature>
<feature type="active site" description="Proton acceptor" evidence="1">
    <location>
        <position position="20"/>
    </location>
</feature>
<feature type="binding site" evidence="1">
    <location>
        <position position="15"/>
    </location>
    <ligand>
        <name>tRNA</name>
        <dbReference type="ChEBI" id="CHEBI:17843"/>
    </ligand>
</feature>
<feature type="binding site" evidence="1">
    <location>
        <position position="65"/>
    </location>
    <ligand>
        <name>tRNA</name>
        <dbReference type="ChEBI" id="CHEBI:17843"/>
    </ligand>
</feature>
<feature type="binding site" evidence="1">
    <location>
        <position position="67"/>
    </location>
    <ligand>
        <name>tRNA</name>
        <dbReference type="ChEBI" id="CHEBI:17843"/>
    </ligand>
</feature>
<feature type="binding site" evidence="1">
    <location>
        <position position="113"/>
    </location>
    <ligand>
        <name>tRNA</name>
        <dbReference type="ChEBI" id="CHEBI:17843"/>
    </ligand>
</feature>
<feature type="site" description="Discriminates between blocked and unblocked aminoacyl-tRNA" evidence="1">
    <location>
        <position position="10"/>
    </location>
</feature>
<feature type="site" description="Stabilizes the basic form of H active site to accept a proton" evidence="1">
    <location>
        <position position="92"/>
    </location>
</feature>